<comment type="function">
    <text evidence="1">ATP-dependent RNA helicase that binds to partially double-stranded RNAs (dsRNAs) in order to unwind RNA secondary structures. Unwinding is promoted in the presence of single-strand binding proteins. Also mediates RNA duplex formation thereby displacing the single-strand RNA binding protein. ATP and ADP modulate its activity: ATP binding and hydrolysis by DDX42 triggers RNA strand separation, whereas the ADP-bound form of the protein triggers annealing of complementary RNA strands. Required for assembly of the 17S U2 SnRNP complex of the spliceosome, a large ribonucleoprotein complex that removes introns from transcribed pre-mRNAs: DDX42 associates transiently with the SF3B subcomplex of the 17S U2 SnRNP complex and is released after fulfilling its role in the assembly of 17S U2 SnRNP. Involved in the survival of cells by interacting with TP53BP2 and thereby counteracting the apoptosis-stimulating activity of TP53BP2. Relocalizes TP53BP2 to the cytoplasm.</text>
</comment>
<comment type="catalytic activity">
    <reaction evidence="1">
        <text>ATP + H2O = ADP + phosphate + H(+)</text>
        <dbReference type="Rhea" id="RHEA:13065"/>
        <dbReference type="ChEBI" id="CHEBI:15377"/>
        <dbReference type="ChEBI" id="CHEBI:15378"/>
        <dbReference type="ChEBI" id="CHEBI:30616"/>
        <dbReference type="ChEBI" id="CHEBI:43474"/>
        <dbReference type="ChEBI" id="CHEBI:456216"/>
        <dbReference type="EC" id="3.6.4.13"/>
    </reaction>
</comment>
<comment type="subunit">
    <text evidence="1">Transient component of the SF3B subcomplex of the 17S U2 SnRNP complex. Interacts (via the C-terminus) with TP53BP2; the interaction is not inhibitied by TP53BP2 ubiquitination and is independent of p53/TP53.</text>
</comment>
<comment type="subcellular location">
    <subcellularLocation>
        <location evidence="1">Cytoplasm</location>
    </subcellularLocation>
    <subcellularLocation>
        <location evidence="1">Nucleus</location>
    </subcellularLocation>
</comment>
<comment type="alternative products">
    <event type="alternative splicing"/>
    <isoform>
        <id>Q810A7-1</id>
        <name>1</name>
        <sequence type="displayed"/>
    </isoform>
    <isoform>
        <id>Q810A7-2</id>
        <name>2</name>
        <sequence type="described" ref="VSP_023519"/>
    </isoform>
</comment>
<comment type="similarity">
    <text evidence="7">Belongs to the DEAD box helicase family. DDX42 subfamily.</text>
</comment>
<comment type="sequence caution" evidence="7">
    <conflict type="erroneous initiation">
        <sequence resource="EMBL-CDS" id="AAH43036"/>
    </conflict>
</comment>
<keyword id="KW-0007">Acetylation</keyword>
<keyword id="KW-0025">Alternative splicing</keyword>
<keyword id="KW-0067">ATP-binding</keyword>
<keyword id="KW-0175">Coiled coil</keyword>
<keyword id="KW-0963">Cytoplasm</keyword>
<keyword id="KW-0903">Direct protein sequencing</keyword>
<keyword id="KW-0347">Helicase</keyword>
<keyword id="KW-0378">Hydrolase</keyword>
<keyword id="KW-1017">Isopeptide bond</keyword>
<keyword id="KW-0488">Methylation</keyword>
<keyword id="KW-0547">Nucleotide-binding</keyword>
<keyword id="KW-0539">Nucleus</keyword>
<keyword id="KW-0597">Phosphoprotein</keyword>
<keyword id="KW-1185">Reference proteome</keyword>
<keyword id="KW-0694">RNA-binding</keyword>
<keyword id="KW-0832">Ubl conjugation</keyword>
<accession>Q810A7</accession>
<accession>Q3TAN3</accession>
<accession>Q3TE60</accession>
<accession>Q8BWZ7</accession>
<accession>Q9D8Q2</accession>
<name>DDX42_MOUSE</name>
<evidence type="ECO:0000250" key="1">
    <source>
        <dbReference type="UniProtKB" id="Q86XP3"/>
    </source>
</evidence>
<evidence type="ECO:0000255" key="2"/>
<evidence type="ECO:0000255" key="3">
    <source>
        <dbReference type="PROSITE-ProRule" id="PRU00541"/>
    </source>
</evidence>
<evidence type="ECO:0000255" key="4">
    <source>
        <dbReference type="PROSITE-ProRule" id="PRU00542"/>
    </source>
</evidence>
<evidence type="ECO:0000256" key="5">
    <source>
        <dbReference type="SAM" id="MobiDB-lite"/>
    </source>
</evidence>
<evidence type="ECO:0000303" key="6">
    <source>
    </source>
</evidence>
<evidence type="ECO:0000305" key="7"/>
<evidence type="ECO:0007744" key="8">
    <source>
    </source>
</evidence>
<evidence type="ECO:0007744" key="9">
    <source>
    </source>
</evidence>
<evidence type="ECO:0007744" key="10">
    <source>
    </source>
</evidence>
<evidence type="ECO:0007744" key="11">
    <source>
    </source>
</evidence>
<evidence type="ECO:0007744" key="12">
    <source>
    </source>
</evidence>
<protein>
    <recommendedName>
        <fullName>ATP-dependent RNA helicase DDX42</fullName>
        <ecNumber evidence="1">3.6.4.13</ecNumber>
    </recommendedName>
    <alternativeName>
        <fullName>DEAD box protein 42</fullName>
    </alternativeName>
</protein>
<dbReference type="EC" id="3.6.4.13" evidence="1"/>
<dbReference type="EMBL" id="AK007805">
    <property type="protein sequence ID" value="BAB25270.3"/>
    <property type="molecule type" value="mRNA"/>
</dbReference>
<dbReference type="EMBL" id="AK049311">
    <property type="protein sequence ID" value="BAC33675.1"/>
    <property type="molecule type" value="mRNA"/>
</dbReference>
<dbReference type="EMBL" id="AK169816">
    <property type="protein sequence ID" value="BAE41388.1"/>
    <property type="molecule type" value="mRNA"/>
</dbReference>
<dbReference type="EMBL" id="AK171730">
    <property type="protein sequence ID" value="BAE42635.1"/>
    <property type="molecule type" value="mRNA"/>
</dbReference>
<dbReference type="EMBL" id="AL604045">
    <property type="status" value="NOT_ANNOTATED_CDS"/>
    <property type="molecule type" value="Genomic_DNA"/>
</dbReference>
<dbReference type="EMBL" id="BC043036">
    <property type="protein sequence ID" value="AAH43036.4"/>
    <property type="status" value="ALT_INIT"/>
    <property type="molecule type" value="mRNA"/>
</dbReference>
<dbReference type="CCDS" id="CCDS48956.1">
    <molecule id="Q810A7-1"/>
</dbReference>
<dbReference type="RefSeq" id="NP_082350.3">
    <molecule id="Q810A7-1"/>
    <property type="nucleotide sequence ID" value="NM_028074.4"/>
</dbReference>
<dbReference type="SMR" id="Q810A7"/>
<dbReference type="BioGRID" id="215115">
    <property type="interactions" value="16"/>
</dbReference>
<dbReference type="FunCoup" id="Q810A7">
    <property type="interactions" value="6111"/>
</dbReference>
<dbReference type="IntAct" id="Q810A7">
    <property type="interactions" value="1"/>
</dbReference>
<dbReference type="STRING" id="10090.ENSMUSP00000021046"/>
<dbReference type="GlyGen" id="Q810A7">
    <property type="glycosylation" value="1 site, 1 O-linked glycan (1 site)"/>
</dbReference>
<dbReference type="iPTMnet" id="Q810A7"/>
<dbReference type="PhosphoSitePlus" id="Q810A7"/>
<dbReference type="SwissPalm" id="Q810A7"/>
<dbReference type="jPOST" id="Q810A7"/>
<dbReference type="PaxDb" id="10090-ENSMUSP00000021046"/>
<dbReference type="PeptideAtlas" id="Q810A7"/>
<dbReference type="ProteomicsDB" id="279852">
    <molecule id="Q810A7-1"/>
</dbReference>
<dbReference type="ProteomicsDB" id="279853">
    <molecule id="Q810A7-2"/>
</dbReference>
<dbReference type="Pumba" id="Q810A7"/>
<dbReference type="Antibodypedia" id="18710">
    <property type="antibodies" value="96 antibodies from 19 providers"/>
</dbReference>
<dbReference type="DNASU" id="72047"/>
<dbReference type="Ensembl" id="ENSMUST00000021046.6">
    <molecule id="Q810A7-1"/>
    <property type="protein sequence ID" value="ENSMUSP00000021046.6"/>
    <property type="gene ID" value="ENSMUSG00000020705.7"/>
</dbReference>
<dbReference type="GeneID" id="72047"/>
<dbReference type="KEGG" id="mmu:72047"/>
<dbReference type="UCSC" id="uc007lyk.2">
    <molecule id="Q810A7-1"/>
    <property type="organism name" value="mouse"/>
</dbReference>
<dbReference type="AGR" id="MGI:1919297"/>
<dbReference type="CTD" id="11325"/>
<dbReference type="MGI" id="MGI:1919297">
    <property type="gene designation" value="Ddx42"/>
</dbReference>
<dbReference type="VEuPathDB" id="HostDB:ENSMUSG00000020705"/>
<dbReference type="eggNOG" id="KOG0339">
    <property type="taxonomic scope" value="Eukaryota"/>
</dbReference>
<dbReference type="GeneTree" id="ENSGT00940000156559"/>
<dbReference type="HOGENOM" id="CLU_003041_9_0_1"/>
<dbReference type="InParanoid" id="Q810A7"/>
<dbReference type="OMA" id="DHTWEQT"/>
<dbReference type="OrthoDB" id="196131at2759"/>
<dbReference type="PhylomeDB" id="Q810A7"/>
<dbReference type="TreeFam" id="TF300351"/>
<dbReference type="Reactome" id="R-MMU-72163">
    <property type="pathway name" value="mRNA Splicing - Major Pathway"/>
</dbReference>
<dbReference type="Reactome" id="R-MMU-72165">
    <property type="pathway name" value="mRNA Splicing - Minor Pathway"/>
</dbReference>
<dbReference type="BioGRID-ORCS" id="72047">
    <property type="hits" value="17 hits in 82 CRISPR screens"/>
</dbReference>
<dbReference type="ChiTaRS" id="Ddx42">
    <property type="organism name" value="mouse"/>
</dbReference>
<dbReference type="PRO" id="PR:Q810A7"/>
<dbReference type="Proteomes" id="UP000000589">
    <property type="component" value="Chromosome 11"/>
</dbReference>
<dbReference type="RNAct" id="Q810A7">
    <property type="molecule type" value="protein"/>
</dbReference>
<dbReference type="Bgee" id="ENSMUSG00000020705">
    <property type="expression patterns" value="Expressed in retinal neural layer and 258 other cell types or tissues"/>
</dbReference>
<dbReference type="GO" id="GO:0005737">
    <property type="term" value="C:cytoplasm"/>
    <property type="evidence" value="ECO:0000250"/>
    <property type="project" value="UniProtKB"/>
</dbReference>
<dbReference type="GO" id="GO:0005829">
    <property type="term" value="C:cytosol"/>
    <property type="evidence" value="ECO:0007669"/>
    <property type="project" value="Ensembl"/>
</dbReference>
<dbReference type="GO" id="GO:0016607">
    <property type="term" value="C:nuclear speck"/>
    <property type="evidence" value="ECO:0007669"/>
    <property type="project" value="Ensembl"/>
</dbReference>
<dbReference type="GO" id="GO:0005634">
    <property type="term" value="C:nucleus"/>
    <property type="evidence" value="ECO:0000250"/>
    <property type="project" value="UniProtKB"/>
</dbReference>
<dbReference type="GO" id="GO:0071004">
    <property type="term" value="C:U2-type prespliceosome"/>
    <property type="evidence" value="ECO:0000250"/>
    <property type="project" value="UniProtKB"/>
</dbReference>
<dbReference type="GO" id="GO:0005524">
    <property type="term" value="F:ATP binding"/>
    <property type="evidence" value="ECO:0007669"/>
    <property type="project" value="UniProtKB-KW"/>
</dbReference>
<dbReference type="GO" id="GO:0016887">
    <property type="term" value="F:ATP hydrolysis activity"/>
    <property type="evidence" value="ECO:0007669"/>
    <property type="project" value="RHEA"/>
</dbReference>
<dbReference type="GO" id="GO:0003723">
    <property type="term" value="F:RNA binding"/>
    <property type="evidence" value="ECO:0007669"/>
    <property type="project" value="UniProtKB-KW"/>
</dbReference>
<dbReference type="GO" id="GO:0003724">
    <property type="term" value="F:RNA helicase activity"/>
    <property type="evidence" value="ECO:0007669"/>
    <property type="project" value="UniProtKB-EC"/>
</dbReference>
<dbReference type="GO" id="GO:0008104">
    <property type="term" value="P:protein localization"/>
    <property type="evidence" value="ECO:0000250"/>
    <property type="project" value="UniProtKB"/>
</dbReference>
<dbReference type="GO" id="GO:0042981">
    <property type="term" value="P:regulation of apoptotic process"/>
    <property type="evidence" value="ECO:0000250"/>
    <property type="project" value="UniProtKB"/>
</dbReference>
<dbReference type="GO" id="GO:1903241">
    <property type="term" value="P:U2-type prespliceosome assembly"/>
    <property type="evidence" value="ECO:0000250"/>
    <property type="project" value="UniProtKB"/>
</dbReference>
<dbReference type="CDD" id="cd17952">
    <property type="entry name" value="DEADc_DDX42"/>
    <property type="match status" value="1"/>
</dbReference>
<dbReference type="CDD" id="cd18787">
    <property type="entry name" value="SF2_C_DEAD"/>
    <property type="match status" value="1"/>
</dbReference>
<dbReference type="FunFam" id="3.40.50.300:FF:000524">
    <property type="entry name" value="ATP-dependent RNA helicase DDX42"/>
    <property type="match status" value="1"/>
</dbReference>
<dbReference type="FunFam" id="3.40.50.300:FF:000079">
    <property type="entry name" value="probable ATP-dependent RNA helicase DDX17"/>
    <property type="match status" value="1"/>
</dbReference>
<dbReference type="Gene3D" id="3.40.50.300">
    <property type="entry name" value="P-loop containing nucleotide triphosphate hydrolases"/>
    <property type="match status" value="2"/>
</dbReference>
<dbReference type="InterPro" id="IPR011545">
    <property type="entry name" value="DEAD/DEAH_box_helicase_dom"/>
</dbReference>
<dbReference type="InterPro" id="IPR014001">
    <property type="entry name" value="Helicase_ATP-bd"/>
</dbReference>
<dbReference type="InterPro" id="IPR001650">
    <property type="entry name" value="Helicase_C-like"/>
</dbReference>
<dbReference type="InterPro" id="IPR027417">
    <property type="entry name" value="P-loop_NTPase"/>
</dbReference>
<dbReference type="InterPro" id="IPR000629">
    <property type="entry name" value="RNA-helicase_DEAD-box_CS"/>
</dbReference>
<dbReference type="InterPro" id="IPR014014">
    <property type="entry name" value="RNA_helicase_DEAD_Q_motif"/>
</dbReference>
<dbReference type="PANTHER" id="PTHR47958">
    <property type="entry name" value="ATP-DEPENDENT RNA HELICASE DBP3"/>
    <property type="match status" value="1"/>
</dbReference>
<dbReference type="Pfam" id="PF00270">
    <property type="entry name" value="DEAD"/>
    <property type="match status" value="1"/>
</dbReference>
<dbReference type="Pfam" id="PF00271">
    <property type="entry name" value="Helicase_C"/>
    <property type="match status" value="1"/>
</dbReference>
<dbReference type="SMART" id="SM00487">
    <property type="entry name" value="DEXDc"/>
    <property type="match status" value="1"/>
</dbReference>
<dbReference type="SMART" id="SM00490">
    <property type="entry name" value="HELICc"/>
    <property type="match status" value="1"/>
</dbReference>
<dbReference type="SUPFAM" id="SSF52540">
    <property type="entry name" value="P-loop containing nucleoside triphosphate hydrolases"/>
    <property type="match status" value="1"/>
</dbReference>
<dbReference type="PROSITE" id="PS00039">
    <property type="entry name" value="DEAD_ATP_HELICASE"/>
    <property type="match status" value="1"/>
</dbReference>
<dbReference type="PROSITE" id="PS51192">
    <property type="entry name" value="HELICASE_ATP_BIND_1"/>
    <property type="match status" value="1"/>
</dbReference>
<dbReference type="PROSITE" id="PS51194">
    <property type="entry name" value="HELICASE_CTER"/>
    <property type="match status" value="1"/>
</dbReference>
<dbReference type="PROSITE" id="PS51195">
    <property type="entry name" value="Q_MOTIF"/>
    <property type="match status" value="1"/>
</dbReference>
<reference key="1">
    <citation type="journal article" date="2005" name="Science">
        <title>The transcriptional landscape of the mammalian genome.</title>
        <authorList>
            <person name="Carninci P."/>
            <person name="Kasukawa T."/>
            <person name="Katayama S."/>
            <person name="Gough J."/>
            <person name="Frith M.C."/>
            <person name="Maeda N."/>
            <person name="Oyama R."/>
            <person name="Ravasi T."/>
            <person name="Lenhard B."/>
            <person name="Wells C."/>
            <person name="Kodzius R."/>
            <person name="Shimokawa K."/>
            <person name="Bajic V.B."/>
            <person name="Brenner S.E."/>
            <person name="Batalov S."/>
            <person name="Forrest A.R."/>
            <person name="Zavolan M."/>
            <person name="Davis M.J."/>
            <person name="Wilming L.G."/>
            <person name="Aidinis V."/>
            <person name="Allen J.E."/>
            <person name="Ambesi-Impiombato A."/>
            <person name="Apweiler R."/>
            <person name="Aturaliya R.N."/>
            <person name="Bailey T.L."/>
            <person name="Bansal M."/>
            <person name="Baxter L."/>
            <person name="Beisel K.W."/>
            <person name="Bersano T."/>
            <person name="Bono H."/>
            <person name="Chalk A.M."/>
            <person name="Chiu K.P."/>
            <person name="Choudhary V."/>
            <person name="Christoffels A."/>
            <person name="Clutterbuck D.R."/>
            <person name="Crowe M.L."/>
            <person name="Dalla E."/>
            <person name="Dalrymple B.P."/>
            <person name="de Bono B."/>
            <person name="Della Gatta G."/>
            <person name="di Bernardo D."/>
            <person name="Down T."/>
            <person name="Engstrom P."/>
            <person name="Fagiolini M."/>
            <person name="Faulkner G."/>
            <person name="Fletcher C.F."/>
            <person name="Fukushima T."/>
            <person name="Furuno M."/>
            <person name="Futaki S."/>
            <person name="Gariboldi M."/>
            <person name="Georgii-Hemming P."/>
            <person name="Gingeras T.R."/>
            <person name="Gojobori T."/>
            <person name="Green R.E."/>
            <person name="Gustincich S."/>
            <person name="Harbers M."/>
            <person name="Hayashi Y."/>
            <person name="Hensch T.K."/>
            <person name="Hirokawa N."/>
            <person name="Hill D."/>
            <person name="Huminiecki L."/>
            <person name="Iacono M."/>
            <person name="Ikeo K."/>
            <person name="Iwama A."/>
            <person name="Ishikawa T."/>
            <person name="Jakt M."/>
            <person name="Kanapin A."/>
            <person name="Katoh M."/>
            <person name="Kawasawa Y."/>
            <person name="Kelso J."/>
            <person name="Kitamura H."/>
            <person name="Kitano H."/>
            <person name="Kollias G."/>
            <person name="Krishnan S.P."/>
            <person name="Kruger A."/>
            <person name="Kummerfeld S.K."/>
            <person name="Kurochkin I.V."/>
            <person name="Lareau L.F."/>
            <person name="Lazarevic D."/>
            <person name="Lipovich L."/>
            <person name="Liu J."/>
            <person name="Liuni S."/>
            <person name="McWilliam S."/>
            <person name="Madan Babu M."/>
            <person name="Madera M."/>
            <person name="Marchionni L."/>
            <person name="Matsuda H."/>
            <person name="Matsuzawa S."/>
            <person name="Miki H."/>
            <person name="Mignone F."/>
            <person name="Miyake S."/>
            <person name="Morris K."/>
            <person name="Mottagui-Tabar S."/>
            <person name="Mulder N."/>
            <person name="Nakano N."/>
            <person name="Nakauchi H."/>
            <person name="Ng P."/>
            <person name="Nilsson R."/>
            <person name="Nishiguchi S."/>
            <person name="Nishikawa S."/>
            <person name="Nori F."/>
            <person name="Ohara O."/>
            <person name="Okazaki Y."/>
            <person name="Orlando V."/>
            <person name="Pang K.C."/>
            <person name="Pavan W.J."/>
            <person name="Pavesi G."/>
            <person name="Pesole G."/>
            <person name="Petrovsky N."/>
            <person name="Piazza S."/>
            <person name="Reed J."/>
            <person name="Reid J.F."/>
            <person name="Ring B.Z."/>
            <person name="Ringwald M."/>
            <person name="Rost B."/>
            <person name="Ruan Y."/>
            <person name="Salzberg S.L."/>
            <person name="Sandelin A."/>
            <person name="Schneider C."/>
            <person name="Schoenbach C."/>
            <person name="Sekiguchi K."/>
            <person name="Semple C.A."/>
            <person name="Seno S."/>
            <person name="Sessa L."/>
            <person name="Sheng Y."/>
            <person name="Shibata Y."/>
            <person name="Shimada H."/>
            <person name="Shimada K."/>
            <person name="Silva D."/>
            <person name="Sinclair B."/>
            <person name="Sperling S."/>
            <person name="Stupka E."/>
            <person name="Sugiura K."/>
            <person name="Sultana R."/>
            <person name="Takenaka Y."/>
            <person name="Taki K."/>
            <person name="Tammoja K."/>
            <person name="Tan S.L."/>
            <person name="Tang S."/>
            <person name="Taylor M.S."/>
            <person name="Tegner J."/>
            <person name="Teichmann S.A."/>
            <person name="Ueda H.R."/>
            <person name="van Nimwegen E."/>
            <person name="Verardo R."/>
            <person name="Wei C.L."/>
            <person name="Yagi K."/>
            <person name="Yamanishi H."/>
            <person name="Zabarovsky E."/>
            <person name="Zhu S."/>
            <person name="Zimmer A."/>
            <person name="Hide W."/>
            <person name="Bult C."/>
            <person name="Grimmond S.M."/>
            <person name="Teasdale R.D."/>
            <person name="Liu E.T."/>
            <person name="Brusic V."/>
            <person name="Quackenbush J."/>
            <person name="Wahlestedt C."/>
            <person name="Mattick J.S."/>
            <person name="Hume D.A."/>
            <person name="Kai C."/>
            <person name="Sasaki D."/>
            <person name="Tomaru Y."/>
            <person name="Fukuda S."/>
            <person name="Kanamori-Katayama M."/>
            <person name="Suzuki M."/>
            <person name="Aoki J."/>
            <person name="Arakawa T."/>
            <person name="Iida J."/>
            <person name="Imamura K."/>
            <person name="Itoh M."/>
            <person name="Kato T."/>
            <person name="Kawaji H."/>
            <person name="Kawagashira N."/>
            <person name="Kawashima T."/>
            <person name="Kojima M."/>
            <person name="Kondo S."/>
            <person name="Konno H."/>
            <person name="Nakano K."/>
            <person name="Ninomiya N."/>
            <person name="Nishio T."/>
            <person name="Okada M."/>
            <person name="Plessy C."/>
            <person name="Shibata K."/>
            <person name="Shiraki T."/>
            <person name="Suzuki S."/>
            <person name="Tagami M."/>
            <person name="Waki K."/>
            <person name="Watahiki A."/>
            <person name="Okamura-Oho Y."/>
            <person name="Suzuki H."/>
            <person name="Kawai J."/>
            <person name="Hayashizaki Y."/>
        </authorList>
    </citation>
    <scope>NUCLEOTIDE SEQUENCE [LARGE SCALE MRNA] (ISOFORMS 1 AND 2)</scope>
    <source>
        <strain>C57BL/6J</strain>
        <strain>NOD</strain>
        <tissue>Embryonic stem cell</tissue>
        <tissue>Pancreas</tissue>
        <tissue>Spleen</tissue>
        <tissue>Thymus</tissue>
    </source>
</reference>
<reference key="2">
    <citation type="journal article" date="2009" name="PLoS Biol.">
        <title>Lineage-specific biology revealed by a finished genome assembly of the mouse.</title>
        <authorList>
            <person name="Church D.M."/>
            <person name="Goodstadt L."/>
            <person name="Hillier L.W."/>
            <person name="Zody M.C."/>
            <person name="Goldstein S."/>
            <person name="She X."/>
            <person name="Bult C.J."/>
            <person name="Agarwala R."/>
            <person name="Cherry J.L."/>
            <person name="DiCuccio M."/>
            <person name="Hlavina W."/>
            <person name="Kapustin Y."/>
            <person name="Meric P."/>
            <person name="Maglott D."/>
            <person name="Birtle Z."/>
            <person name="Marques A.C."/>
            <person name="Graves T."/>
            <person name="Zhou S."/>
            <person name="Teague B."/>
            <person name="Potamousis K."/>
            <person name="Churas C."/>
            <person name="Place M."/>
            <person name="Herschleb J."/>
            <person name="Runnheim R."/>
            <person name="Forrest D."/>
            <person name="Amos-Landgraf J."/>
            <person name="Schwartz D.C."/>
            <person name="Cheng Z."/>
            <person name="Lindblad-Toh K."/>
            <person name="Eichler E.E."/>
            <person name="Ponting C.P."/>
        </authorList>
    </citation>
    <scope>NUCLEOTIDE SEQUENCE [LARGE SCALE GENOMIC DNA]</scope>
    <source>
        <strain>C57BL/6J</strain>
    </source>
</reference>
<reference key="3">
    <citation type="journal article" date="2004" name="Genome Res.">
        <title>The status, quality, and expansion of the NIH full-length cDNA project: the Mammalian Gene Collection (MGC).</title>
        <authorList>
            <consortium name="The MGC Project Team"/>
        </authorList>
    </citation>
    <scope>NUCLEOTIDE SEQUENCE [LARGE SCALE MRNA] (ISOFORM 1)</scope>
    <source>
        <strain>C57BL/6J</strain>
        <tissue>Brain</tissue>
    </source>
</reference>
<reference key="4">
    <citation type="submission" date="2009-01" db="UniProtKB">
        <authorList>
            <person name="Lubec G."/>
            <person name="Sunyer B."/>
            <person name="Chen W.-Q."/>
        </authorList>
    </citation>
    <scope>PROTEIN SEQUENCE OF 616-626</scope>
    <scope>IDENTIFICATION BY MASS SPECTROMETRY</scope>
    <source>
        <strain>OF1</strain>
        <tissue>Hippocampus</tissue>
    </source>
</reference>
<reference key="5">
    <citation type="journal article" date="2004" name="Mol. Cell. Proteomics">
        <title>Phosphoproteomic analysis of the developing mouse brain.</title>
        <authorList>
            <person name="Ballif B.A."/>
            <person name="Villen J."/>
            <person name="Beausoleil S.A."/>
            <person name="Schwartz D."/>
            <person name="Gygi S.P."/>
        </authorList>
    </citation>
    <scope>IDENTIFICATION BY MASS SPECTROMETRY [LARGE SCALE ANALYSIS]</scope>
    <source>
        <tissue>Embryonic brain</tissue>
    </source>
</reference>
<reference key="6">
    <citation type="journal article" date="2007" name="J. Proteome Res.">
        <title>A differential phosphoproteomic analysis of retinoic acid-treated P19 cells.</title>
        <authorList>
            <person name="Smith J.C."/>
            <person name="Duchesne M.A."/>
            <person name="Tozzi P."/>
            <person name="Ethier M."/>
            <person name="Figeys D."/>
        </authorList>
    </citation>
    <scope>PHOSPHORYLATION [LARGE SCALE ANALYSIS] AT SER-104</scope>
    <scope>IDENTIFICATION BY MASS SPECTROMETRY [LARGE SCALE ANALYSIS]</scope>
    <source>
        <tissue>Teratocarcinoma</tissue>
    </source>
</reference>
<reference key="7">
    <citation type="journal article" date="2007" name="Proc. Natl. Acad. Sci. U.S.A.">
        <title>Large-scale phosphorylation analysis of mouse liver.</title>
        <authorList>
            <person name="Villen J."/>
            <person name="Beausoleil S.A."/>
            <person name="Gerber S.A."/>
            <person name="Gygi S.P."/>
        </authorList>
    </citation>
    <scope>PHOSPHORYLATION [LARGE SCALE ANALYSIS] AT SER-109</scope>
    <scope>IDENTIFICATION BY MASS SPECTROMETRY [LARGE SCALE ANALYSIS]</scope>
    <source>
        <tissue>Liver</tissue>
    </source>
</reference>
<reference key="8">
    <citation type="journal article" date="2009" name="Immunity">
        <title>The phagosomal proteome in interferon-gamma-activated macrophages.</title>
        <authorList>
            <person name="Trost M."/>
            <person name="English L."/>
            <person name="Lemieux S."/>
            <person name="Courcelles M."/>
            <person name="Desjardins M."/>
            <person name="Thibault P."/>
        </authorList>
    </citation>
    <scope>PHOSPHORYLATION [LARGE SCALE ANALYSIS] AT SER-104 AND SER-109</scope>
    <scope>IDENTIFICATION BY MASS SPECTROMETRY [LARGE SCALE ANALYSIS]</scope>
</reference>
<reference key="9">
    <citation type="journal article" date="2009" name="Mol. Cell. Proteomics">
        <title>Large scale localization of protein phosphorylation by use of electron capture dissociation mass spectrometry.</title>
        <authorList>
            <person name="Sweet S.M."/>
            <person name="Bailey C.M."/>
            <person name="Cunningham D.L."/>
            <person name="Heath J.K."/>
            <person name="Cooper H.J."/>
        </authorList>
    </citation>
    <scope>IDENTIFICATION BY MASS SPECTROMETRY [LARGE SCALE ANALYSIS]</scope>
    <source>
        <tissue>Embryonic fibroblast</tissue>
    </source>
</reference>
<reference key="10">
    <citation type="journal article" date="2010" name="Cell">
        <title>A tissue-specific atlas of mouse protein phosphorylation and expression.</title>
        <authorList>
            <person name="Huttlin E.L."/>
            <person name="Jedrychowski M.P."/>
            <person name="Elias J.E."/>
            <person name="Goswami T."/>
            <person name="Rad R."/>
            <person name="Beausoleil S.A."/>
            <person name="Villen J."/>
            <person name="Haas W."/>
            <person name="Sowa M.E."/>
            <person name="Gygi S.P."/>
        </authorList>
    </citation>
    <scope>PHOSPHORYLATION [LARGE SCALE ANALYSIS] AT SER-104; SER-109; SER-111 AND SER-185</scope>
    <scope>IDENTIFICATION BY MASS SPECTROMETRY [LARGE SCALE ANALYSIS]</scope>
    <source>
        <tissue>Brain</tissue>
        <tissue>Brown adipose tissue</tissue>
        <tissue>Heart</tissue>
        <tissue>Kidney</tissue>
        <tissue>Liver</tissue>
        <tissue>Lung</tissue>
        <tissue>Pancreas</tissue>
        <tissue>Spleen</tissue>
        <tissue>Testis</tissue>
    </source>
</reference>
<reference key="11">
    <citation type="journal article" date="2014" name="Mol. Cell. Proteomics">
        <title>Immunoaffinity enrichment and mass spectrometry analysis of protein methylation.</title>
        <authorList>
            <person name="Guo A."/>
            <person name="Gu H."/>
            <person name="Zhou J."/>
            <person name="Mulhern D."/>
            <person name="Wang Y."/>
            <person name="Lee K.A."/>
            <person name="Yang V."/>
            <person name="Aguiar M."/>
            <person name="Kornhauser J."/>
            <person name="Jia X."/>
            <person name="Ren J."/>
            <person name="Beausoleil S.A."/>
            <person name="Silva J.C."/>
            <person name="Vemulapalli V."/>
            <person name="Bedford M.T."/>
            <person name="Comb M.J."/>
        </authorList>
    </citation>
    <scope>METHYLATION [LARGE SCALE ANALYSIS] AT ARG-12</scope>
    <scope>IDENTIFICATION BY MASS SPECTROMETRY [LARGE SCALE ANALYSIS]</scope>
    <source>
        <tissue>Brain</tissue>
        <tissue>Embryo</tissue>
    </source>
</reference>
<sequence length="929" mass="101965">MNWNKGGPGTKRGFGFGGFAISAGKKEEAKLPQQSHSAFGAASSSSGFGKSAPPQLPSFYKIGSKRANFDEENAYFEDEEEDSSNVDLPYIPAENSPTRQQFHSKPADSDSDDDPLEAFMAEVEDQAARDMKRLEEKDKERKNVKGIRDDIEEEDDQEAYFRYMAENPTAGVVQEEEEDNLEYDSDGNPIAPSKKIIDPLPPIDHSEIDYPPFEKNFYNEHEEITNLTPQQLIDLRHKLNLRVSGAAPPRPGSSFAHFGFDEQLMHQIRKSEYTQPTPIQCQGVPVALSGRDMIGIAKTGSGKTAAFIWPMLIHIMDQKELEPGDGPIAVIVCPTRELCQQIHAECKRFGKAYNLRSVAVYGGGSMWEQAKALQEGAEIVVCTPGRLIDHVKKKATNLQRVSYLVFDEADRMFDMGFEYQVRSIASHVRPDRQTLLFSATFRKKIEKLARDILIDPIRVVQGDIGEANEDVTQIVEILHSGPSKWNWLTRRLVEFTSSGSVLLFVTKKANAEELASNLKQEGHNLGLLHGDMDQSERNKVISDFKKKDIPVLVATDVAARGLDIPSIKTVINYDVARDIDTHTHRIGRTGRAGEKGVAYTLLTPKDSNFAGDLVRNLEGANQHVSKELLDLAMQNAWFRKSRFKGGKGKKLNIGGGGLGYRERPGLGSENSDRGNNNNVMSNYEAYKPSTGAMGDRLTAMKAAFQSQYKSHFVAASLSNQKAGTSSAGASGWTSAGSLNSVPTNSAQQGHNSPDNPMTSSTKNIPGFNNSGNISSAPVTYPSIGAQGVNNTASGNNSREGIGGGNGKRERYTENRGGSRHSHGDGGNRHGDGGRHGDGYRYPESGSRHTDGHRHGETRHGGSAGRHGESRGANDGRNGESRKEGFNRENKMDPKVDSSRMDKVDSKTDKTPDGFAVPEPPKRKKSRWDS</sequence>
<proteinExistence type="evidence at protein level"/>
<feature type="chain" id="PRO_0000280059" description="ATP-dependent RNA helicase DDX42">
    <location>
        <begin position="1"/>
        <end position="929"/>
    </location>
</feature>
<feature type="domain" description="Helicase ATP-binding" evidence="3">
    <location>
        <begin position="284"/>
        <end position="459"/>
    </location>
</feature>
<feature type="domain" description="Helicase C-terminal" evidence="4">
    <location>
        <begin position="487"/>
        <end position="632"/>
    </location>
</feature>
<feature type="region of interest" description="Disordered" evidence="5">
    <location>
        <begin position="25"/>
        <end position="119"/>
    </location>
</feature>
<feature type="region of interest" description="Disordered" evidence="5">
    <location>
        <begin position="182"/>
        <end position="203"/>
    </location>
</feature>
<feature type="region of interest" description="Disordered" evidence="5">
    <location>
        <begin position="662"/>
        <end position="682"/>
    </location>
</feature>
<feature type="region of interest" description="Disordered" evidence="5">
    <location>
        <begin position="723"/>
        <end position="929"/>
    </location>
</feature>
<feature type="region of interest" description="Necessary for interaction with TP53BP2" evidence="1">
    <location>
        <begin position="739"/>
        <end position="828"/>
    </location>
</feature>
<feature type="coiled-coil region" evidence="2">
    <location>
        <begin position="116"/>
        <end position="157"/>
    </location>
</feature>
<feature type="short sequence motif" description="Q motif">
    <location>
        <begin position="253"/>
        <end position="281"/>
    </location>
</feature>
<feature type="short sequence motif" description="DEAD box">
    <location>
        <begin position="407"/>
        <end position="410"/>
    </location>
</feature>
<feature type="compositionally biased region" description="Low complexity" evidence="5">
    <location>
        <begin position="35"/>
        <end position="52"/>
    </location>
</feature>
<feature type="compositionally biased region" description="Acidic residues" evidence="5">
    <location>
        <begin position="70"/>
        <end position="84"/>
    </location>
</feature>
<feature type="compositionally biased region" description="Low complexity" evidence="5">
    <location>
        <begin position="723"/>
        <end position="737"/>
    </location>
</feature>
<feature type="compositionally biased region" description="Polar residues" evidence="5">
    <location>
        <begin position="738"/>
        <end position="777"/>
    </location>
</feature>
<feature type="compositionally biased region" description="Polar residues" evidence="5">
    <location>
        <begin position="787"/>
        <end position="798"/>
    </location>
</feature>
<feature type="compositionally biased region" description="Basic and acidic residues" evidence="5">
    <location>
        <begin position="821"/>
        <end position="911"/>
    </location>
</feature>
<feature type="binding site" evidence="3">
    <location>
        <begin position="297"/>
        <end position="304"/>
    </location>
    <ligand>
        <name>ATP</name>
        <dbReference type="ChEBI" id="CHEBI:30616"/>
    </ligand>
</feature>
<feature type="modified residue" description="N6-acetyllysine" evidence="1">
    <location>
        <position position="5"/>
    </location>
</feature>
<feature type="modified residue" description="Omega-N-methylarginine" evidence="12">
    <location>
        <position position="12"/>
    </location>
</feature>
<feature type="modified residue" description="Phosphoserine" evidence="1">
    <location>
        <position position="58"/>
    </location>
</feature>
<feature type="modified residue" description="Phosphoserine" evidence="1">
    <location>
        <position position="96"/>
    </location>
</feature>
<feature type="modified residue" description="Phosphoserine" evidence="9 10 11">
    <location>
        <position position="104"/>
    </location>
</feature>
<feature type="modified residue" description="Phosphoserine" evidence="8 10 11">
    <location>
        <position position="109"/>
    </location>
</feature>
<feature type="modified residue" description="Phosphoserine" evidence="11">
    <location>
        <position position="111"/>
    </location>
</feature>
<feature type="modified residue" description="Phosphoserine" evidence="11">
    <location>
        <position position="185"/>
    </location>
</feature>
<feature type="cross-link" description="Glycyl lysine isopeptide (Lys-Gly) (interchain with G-Cter in SUMO2)" evidence="1">
    <location>
        <position position="894"/>
    </location>
</feature>
<feature type="splice variant" id="VSP_023519" description="In isoform 2." evidence="6">
    <location>
        <begin position="1"/>
        <end position="119"/>
    </location>
</feature>
<feature type="sequence conflict" description="In Ref. 1; BAB25270." evidence="7" ref="1">
    <original>L</original>
    <variation>M</variation>
    <location>
        <position position="503"/>
    </location>
</feature>
<feature type="sequence conflict" description="In Ref. 1; BAE42635." evidence="7" ref="1">
    <original>R</original>
    <variation>G</variation>
    <location>
        <position position="537"/>
    </location>
</feature>
<feature type="sequence conflict" description="In Ref. 1; BAC33675." evidence="7" ref="1">
    <original>H</original>
    <variation>Y</variation>
    <location>
        <position position="859"/>
    </location>
</feature>
<organism>
    <name type="scientific">Mus musculus</name>
    <name type="common">Mouse</name>
    <dbReference type="NCBI Taxonomy" id="10090"/>
    <lineage>
        <taxon>Eukaryota</taxon>
        <taxon>Metazoa</taxon>
        <taxon>Chordata</taxon>
        <taxon>Craniata</taxon>
        <taxon>Vertebrata</taxon>
        <taxon>Euteleostomi</taxon>
        <taxon>Mammalia</taxon>
        <taxon>Eutheria</taxon>
        <taxon>Euarchontoglires</taxon>
        <taxon>Glires</taxon>
        <taxon>Rodentia</taxon>
        <taxon>Myomorpha</taxon>
        <taxon>Muroidea</taxon>
        <taxon>Muridae</taxon>
        <taxon>Murinae</taxon>
        <taxon>Mus</taxon>
        <taxon>Mus</taxon>
    </lineage>
</organism>
<gene>
    <name type="primary">Ddx42</name>
</gene>